<organism>
    <name type="scientific">Homo sapiens</name>
    <name type="common">Human</name>
    <dbReference type="NCBI Taxonomy" id="9606"/>
    <lineage>
        <taxon>Eukaryota</taxon>
        <taxon>Metazoa</taxon>
        <taxon>Chordata</taxon>
        <taxon>Craniata</taxon>
        <taxon>Vertebrata</taxon>
        <taxon>Euteleostomi</taxon>
        <taxon>Mammalia</taxon>
        <taxon>Eutheria</taxon>
        <taxon>Euarchontoglires</taxon>
        <taxon>Primates</taxon>
        <taxon>Haplorrhini</taxon>
        <taxon>Catarrhini</taxon>
        <taxon>Hominidae</taxon>
        <taxon>Homo</taxon>
    </lineage>
</organism>
<sequence length="202" mass="21534">MERGAGAKLLPLLLLLRATGFTCAQTDGRNGYTAVIEVTSGGPWGDWAWPEMCPDGFFASGFSLKVEPPQGIPGDDTALNGIRLHCARGNVLGNTHVVESQSGSWGEWSEPLWCRGGAYLVAFSLRVEAPTTLGDNTAANNVRFRCSDGEELQGPGLSWGDFGDWSDHCPKGACGLQTKIQGPRGLGDDTALNDARLFCCRS</sequence>
<accession>Q7Z5L0</accession>
<accession>C9JQ15</accession>
<accession>E9PAU9</accession>
<accession>E9PGP4</accession>
<accession>Q3SXP1</accession>
<accession>Q8IUY1</accession>
<dbReference type="EMBL" id="AF521892">
    <property type="protein sequence ID" value="AAP80865.1"/>
    <property type="molecule type" value="mRNA"/>
</dbReference>
<dbReference type="EMBL" id="BE669879">
    <property type="status" value="NOT_ANNOTATED_CDS"/>
    <property type="molecule type" value="mRNA"/>
</dbReference>
<dbReference type="EMBL" id="AY359099">
    <property type="protein sequence ID" value="AAQ89457.1"/>
    <property type="molecule type" value="mRNA"/>
</dbReference>
<dbReference type="EMBL" id="CD367473">
    <property type="status" value="NOT_ANNOTATED_CDS"/>
    <property type="molecule type" value="Genomic_DNA"/>
</dbReference>
<dbReference type="EMBL" id="AC233723">
    <property type="status" value="NOT_ANNOTATED_CDS"/>
    <property type="molecule type" value="Genomic_DNA"/>
</dbReference>
<dbReference type="EMBL" id="BC038467">
    <property type="protein sequence ID" value="AAH38467.1"/>
    <property type="molecule type" value="mRNA"/>
</dbReference>
<dbReference type="EMBL" id="BC104195">
    <property type="protein sequence ID" value="AAI04196.1"/>
    <property type="molecule type" value="mRNA"/>
</dbReference>
<dbReference type="CCDS" id="CCDS11055.1">
    <molecule id="Q7Z5L0-1"/>
</dbReference>
<dbReference type="CCDS" id="CCDS45585.1">
    <molecule id="Q7Z5L0-2"/>
</dbReference>
<dbReference type="CCDS" id="CCDS45586.1">
    <molecule id="Q7Z5L0-3"/>
</dbReference>
<dbReference type="CCDS" id="CCDS45587.1">
    <molecule id="Q7Z5L0-4"/>
</dbReference>
<dbReference type="RefSeq" id="NP_001138411.1">
    <molecule id="Q7Z5L0-4"/>
    <property type="nucleotide sequence ID" value="NM_001144939.2"/>
</dbReference>
<dbReference type="RefSeq" id="NP_001138412.1">
    <molecule id="Q7Z5L0-3"/>
    <property type="nucleotide sequence ID" value="NM_001144940.2"/>
</dbReference>
<dbReference type="RefSeq" id="NP_001138413.1">
    <molecule id="Q7Z5L0-2"/>
    <property type="nucleotide sequence ID" value="NM_001144941.2"/>
</dbReference>
<dbReference type="RefSeq" id="NP_872372.1">
    <molecule id="Q7Z5L0-1"/>
    <property type="nucleotide sequence ID" value="NM_182566.3"/>
</dbReference>
<dbReference type="SMR" id="Q7Z5L0"/>
<dbReference type="FunCoup" id="Q7Z5L0">
    <property type="interactions" value="131"/>
</dbReference>
<dbReference type="IntAct" id="Q7Z5L0">
    <property type="interactions" value="1"/>
</dbReference>
<dbReference type="STRING" id="9606.ENSP00000328397"/>
<dbReference type="GlyGen" id="Q7Z5L0">
    <property type="glycosylation" value="2 sites"/>
</dbReference>
<dbReference type="iPTMnet" id="Q7Z5L0"/>
<dbReference type="PhosphoSitePlus" id="Q7Z5L0"/>
<dbReference type="BioMuta" id="VMO1"/>
<dbReference type="DMDM" id="60390935"/>
<dbReference type="jPOST" id="Q7Z5L0"/>
<dbReference type="MassIVE" id="Q7Z5L0"/>
<dbReference type="PaxDb" id="9606-ENSP00000328397"/>
<dbReference type="PeptideAtlas" id="Q7Z5L0"/>
<dbReference type="ProteomicsDB" id="11185"/>
<dbReference type="ProteomicsDB" id="19084"/>
<dbReference type="ProteomicsDB" id="20361"/>
<dbReference type="ProteomicsDB" id="69315">
    <molecule id="Q7Z5L0-1"/>
</dbReference>
<dbReference type="Antibodypedia" id="51551">
    <property type="antibodies" value="68 antibodies from 16 providers"/>
</dbReference>
<dbReference type="DNASU" id="284013"/>
<dbReference type="Ensembl" id="ENST00000328739.6">
    <molecule id="Q7Z5L0-1"/>
    <property type="protein sequence ID" value="ENSP00000328397.5"/>
    <property type="gene ID" value="ENSG00000182853.12"/>
</dbReference>
<dbReference type="Ensembl" id="ENST00000354194.4">
    <molecule id="Q7Z5L0-2"/>
    <property type="protein sequence ID" value="ENSP00000346133.4"/>
    <property type="gene ID" value="ENSG00000182853.12"/>
</dbReference>
<dbReference type="Ensembl" id="ENST00000416307.6">
    <molecule id="Q7Z5L0-3"/>
    <property type="protein sequence ID" value="ENSP00000390450.2"/>
    <property type="gene ID" value="ENSG00000182853.12"/>
</dbReference>
<dbReference type="Ensembl" id="ENST00000441199.2">
    <molecule id="Q7Z5L0-4"/>
    <property type="protein sequence ID" value="ENSP00000408166.2"/>
    <property type="gene ID" value="ENSG00000182853.12"/>
</dbReference>
<dbReference type="GeneID" id="284013"/>
<dbReference type="KEGG" id="hsa:284013"/>
<dbReference type="MANE-Select" id="ENST00000328739.6">
    <property type="protein sequence ID" value="ENSP00000328397.5"/>
    <property type="RefSeq nucleotide sequence ID" value="NM_182566.3"/>
    <property type="RefSeq protein sequence ID" value="NP_872372.1"/>
</dbReference>
<dbReference type="UCSC" id="uc002fyx.4">
    <molecule id="Q7Z5L0-1"/>
    <property type="organism name" value="human"/>
</dbReference>
<dbReference type="AGR" id="HGNC:30387"/>
<dbReference type="CTD" id="284013"/>
<dbReference type="DisGeNET" id="284013"/>
<dbReference type="GeneCards" id="VMO1"/>
<dbReference type="HGNC" id="HGNC:30387">
    <property type="gene designation" value="VMO1"/>
</dbReference>
<dbReference type="HPA" id="ENSG00000182853">
    <property type="expression patterns" value="Tissue enhanced (lymphoid tissue, pituitary gland)"/>
</dbReference>
<dbReference type="MIM" id="621110">
    <property type="type" value="gene"/>
</dbReference>
<dbReference type="neXtProt" id="NX_Q7Z5L0"/>
<dbReference type="OpenTargets" id="ENSG00000182853"/>
<dbReference type="PharmGKB" id="PA142670619"/>
<dbReference type="VEuPathDB" id="HostDB:ENSG00000182853"/>
<dbReference type="eggNOG" id="ENOG502S05N">
    <property type="taxonomic scope" value="Eukaryota"/>
</dbReference>
<dbReference type="GeneTree" id="ENSGT00390000009313"/>
<dbReference type="HOGENOM" id="CLU_2269772_0_0_1"/>
<dbReference type="InParanoid" id="Q7Z5L0"/>
<dbReference type="OMA" id="IRLHCTR"/>
<dbReference type="OrthoDB" id="6344411at2759"/>
<dbReference type="PAN-GO" id="Q7Z5L0">
    <property type="GO annotations" value="1 GO annotation based on evolutionary models"/>
</dbReference>
<dbReference type="PhylomeDB" id="Q7Z5L0"/>
<dbReference type="TreeFam" id="TF315374"/>
<dbReference type="PathwayCommons" id="Q7Z5L0"/>
<dbReference type="BioGRID-ORCS" id="284013">
    <property type="hits" value="12 hits in 1142 CRISPR screens"/>
</dbReference>
<dbReference type="GenomeRNAi" id="284013"/>
<dbReference type="Pharos" id="Q7Z5L0">
    <property type="development level" value="Tbio"/>
</dbReference>
<dbReference type="PRO" id="PR:Q7Z5L0"/>
<dbReference type="Proteomes" id="UP000005640">
    <property type="component" value="Chromosome 17"/>
</dbReference>
<dbReference type="RNAct" id="Q7Z5L0">
    <property type="molecule type" value="protein"/>
</dbReference>
<dbReference type="Bgee" id="ENSG00000182853">
    <property type="expression patterns" value="Expressed in nasal cavity epithelium and 103 other cell types or tissues"/>
</dbReference>
<dbReference type="GO" id="GO:0070062">
    <property type="term" value="C:extracellular exosome"/>
    <property type="evidence" value="ECO:0007005"/>
    <property type="project" value="UniProtKB"/>
</dbReference>
<dbReference type="GO" id="GO:0005615">
    <property type="term" value="C:extracellular space"/>
    <property type="evidence" value="ECO:0000318"/>
    <property type="project" value="GO_Central"/>
</dbReference>
<dbReference type="CDD" id="cd00220">
    <property type="entry name" value="VMO-I"/>
    <property type="match status" value="1"/>
</dbReference>
<dbReference type="FunFam" id="2.100.10.20:FF:000001">
    <property type="entry name" value="Vitelline membrane outer layer 1 homolog"/>
    <property type="match status" value="1"/>
</dbReference>
<dbReference type="Gene3D" id="2.100.10.20">
    <property type="entry name" value="Vitelline membrane outer layer protein I (VOMI)"/>
    <property type="match status" value="1"/>
</dbReference>
<dbReference type="InterPro" id="IPR005515">
    <property type="entry name" value="VOMI"/>
</dbReference>
<dbReference type="InterPro" id="IPR036706">
    <property type="entry name" value="VOMI_sf"/>
</dbReference>
<dbReference type="PANTHER" id="PTHR18841:SF2">
    <property type="entry name" value="VITELLINE MEMBRANE OUTER LAYER PROTEIN 1 HOMOLOG"/>
    <property type="match status" value="1"/>
</dbReference>
<dbReference type="PANTHER" id="PTHR18841">
    <property type="entry name" value="VITELLINE MEMBRANE OUTER LAYER PROTEIN I-RELATED"/>
    <property type="match status" value="1"/>
</dbReference>
<dbReference type="Pfam" id="PF03762">
    <property type="entry name" value="VOMI"/>
    <property type="match status" value="1"/>
</dbReference>
<dbReference type="SUPFAM" id="SSF51092">
    <property type="entry name" value="Vitelline membrane outer protein-I (VMO-I)"/>
    <property type="match status" value="1"/>
</dbReference>
<protein>
    <recommendedName>
        <fullName>Vitelline membrane outer layer protein 1 homolog</fullName>
    </recommendedName>
</protein>
<comment type="subcellular location">
    <subcellularLocation>
        <location evidence="8">Secreted</location>
    </subcellularLocation>
</comment>
<comment type="alternative products">
    <event type="alternative splicing"/>
    <isoform>
        <id>Q7Z5L0-1</id>
        <name>1</name>
        <sequence type="displayed"/>
    </isoform>
    <isoform>
        <id>Q7Z5L0-2</id>
        <name>2</name>
        <sequence type="described" ref="VSP_045706 VSP_045707"/>
    </isoform>
    <isoform>
        <id>Q7Z5L0-3</id>
        <name>3</name>
        <sequence type="described" ref="VSP_045708"/>
    </isoform>
    <isoform>
        <id>Q7Z5L0-4</id>
        <name>4</name>
        <sequence type="described" ref="VSP_047219"/>
    </isoform>
</comment>
<comment type="similarity">
    <text evidence="8">Belongs to the VMO1 family.</text>
</comment>
<name>VMO1_HUMAN</name>
<gene>
    <name type="primary">VMO1</name>
    <name type="ORF">UNQ6350/PRO21055</name>
</gene>
<evidence type="ECO:0000250" key="1"/>
<evidence type="ECO:0000269" key="2">
    <source>
    </source>
</evidence>
<evidence type="ECO:0000269" key="3">
    <source>
    </source>
</evidence>
<evidence type="ECO:0000269" key="4">
    <source ref="2"/>
</evidence>
<evidence type="ECO:0000303" key="5">
    <source>
    </source>
</evidence>
<evidence type="ECO:0000303" key="6">
    <source ref="2"/>
</evidence>
<evidence type="ECO:0000303" key="7">
    <source ref="4"/>
</evidence>
<evidence type="ECO:0000305" key="8"/>
<reference key="1">
    <citation type="submission" date="2002-06" db="EMBL/GenBank/DDBJ databases">
        <authorList>
            <person name="Ding P."/>
            <person name="Han W."/>
            <person name="Ying W."/>
            <person name="Liu Y."/>
            <person name="Wang L."/>
            <person name="Qiu X."/>
            <person name="Ma D."/>
        </authorList>
    </citation>
    <scope>NUCLEOTIDE SEQUENCE [MRNA] (ISOFORM 1)</scope>
</reference>
<reference key="2">
    <citation type="submission" date="2000-09" db="EMBL/GenBank/DDBJ databases">
        <authorList>
            <consortium name="The Cancer Genome Anatomy Project (CGAP) at the National Cancer Institute"/>
        </authorList>
    </citation>
    <scope>NUCLEOTIDE SEQUENCE [LARGE SCALE MRNA] (ISOFORM 3)</scope>
    <scope>VARIANT ALA-26</scope>
</reference>
<reference key="3">
    <citation type="journal article" date="2003" name="Genome Res.">
        <title>The secreted protein discovery initiative (SPDI), a large-scale effort to identify novel human secreted and transmembrane proteins: a bioinformatics assessment.</title>
        <authorList>
            <person name="Clark H.F."/>
            <person name="Gurney A.L."/>
            <person name="Abaya E."/>
            <person name="Baker K."/>
            <person name="Baldwin D.T."/>
            <person name="Brush J."/>
            <person name="Chen J."/>
            <person name="Chow B."/>
            <person name="Chui C."/>
            <person name="Crowley C."/>
            <person name="Currell B."/>
            <person name="Deuel B."/>
            <person name="Dowd P."/>
            <person name="Eaton D."/>
            <person name="Foster J.S."/>
            <person name="Grimaldi C."/>
            <person name="Gu Q."/>
            <person name="Hass P.E."/>
            <person name="Heldens S."/>
            <person name="Huang A."/>
            <person name="Kim H.S."/>
            <person name="Klimowski L."/>
            <person name="Jin Y."/>
            <person name="Johnson S."/>
            <person name="Lee J."/>
            <person name="Lewis L."/>
            <person name="Liao D."/>
            <person name="Mark M.R."/>
            <person name="Robbie E."/>
            <person name="Sanchez C."/>
            <person name="Schoenfeld J."/>
            <person name="Seshagiri S."/>
            <person name="Simmons L."/>
            <person name="Singh J."/>
            <person name="Smith V."/>
            <person name="Stinson J."/>
            <person name="Vagts A."/>
            <person name="Vandlen R.L."/>
            <person name="Watanabe C."/>
            <person name="Wieand D."/>
            <person name="Woods K."/>
            <person name="Xie M.-H."/>
            <person name="Yansura D.G."/>
            <person name="Yi S."/>
            <person name="Yu G."/>
            <person name="Yuan J."/>
            <person name="Zhang M."/>
            <person name="Zhang Z."/>
            <person name="Goddard A.D."/>
            <person name="Wood W.I."/>
            <person name="Godowski P.J."/>
            <person name="Gray A.M."/>
        </authorList>
    </citation>
    <scope>NUCLEOTIDE SEQUENCE [LARGE SCALE MRNA] (ISOFORM 1)</scope>
</reference>
<reference key="4">
    <citation type="submission" date="2003-06" db="EMBL/GenBank/DDBJ databases">
        <authorList>
            <consortium name="The Cancer Genome Anatomy Project (CGAP) at the National Cancer Institute"/>
        </authorList>
    </citation>
    <scope>NUCLEOTIDE SEQUENCE [LARGE SCALE MRNA] (ISOFORM 4)</scope>
    <source>
        <tissue>Alveolar macrophage</tissue>
    </source>
</reference>
<reference key="5">
    <citation type="journal article" date="2006" name="Nature">
        <title>DNA sequence of human chromosome 17 and analysis of rearrangement in the human lineage.</title>
        <authorList>
            <person name="Zody M.C."/>
            <person name="Garber M."/>
            <person name="Adams D.J."/>
            <person name="Sharpe T."/>
            <person name="Harrow J."/>
            <person name="Lupski J.R."/>
            <person name="Nicholson C."/>
            <person name="Searle S.M."/>
            <person name="Wilming L."/>
            <person name="Young S.K."/>
            <person name="Abouelleil A."/>
            <person name="Allen N.R."/>
            <person name="Bi W."/>
            <person name="Bloom T."/>
            <person name="Borowsky M.L."/>
            <person name="Bugalter B.E."/>
            <person name="Butler J."/>
            <person name="Chang J.L."/>
            <person name="Chen C.-K."/>
            <person name="Cook A."/>
            <person name="Corum B."/>
            <person name="Cuomo C.A."/>
            <person name="de Jong P.J."/>
            <person name="DeCaprio D."/>
            <person name="Dewar K."/>
            <person name="FitzGerald M."/>
            <person name="Gilbert J."/>
            <person name="Gibson R."/>
            <person name="Gnerre S."/>
            <person name="Goldstein S."/>
            <person name="Grafham D.V."/>
            <person name="Grocock R."/>
            <person name="Hafez N."/>
            <person name="Hagopian D.S."/>
            <person name="Hart E."/>
            <person name="Norman C.H."/>
            <person name="Humphray S."/>
            <person name="Jaffe D.B."/>
            <person name="Jones M."/>
            <person name="Kamal M."/>
            <person name="Khodiyar V.K."/>
            <person name="LaButti K."/>
            <person name="Laird G."/>
            <person name="Lehoczky J."/>
            <person name="Liu X."/>
            <person name="Lokyitsang T."/>
            <person name="Loveland J."/>
            <person name="Lui A."/>
            <person name="Macdonald P."/>
            <person name="Major J.E."/>
            <person name="Matthews L."/>
            <person name="Mauceli E."/>
            <person name="McCarroll S.A."/>
            <person name="Mihalev A.H."/>
            <person name="Mudge J."/>
            <person name="Nguyen C."/>
            <person name="Nicol R."/>
            <person name="O'Leary S.B."/>
            <person name="Osoegawa K."/>
            <person name="Schwartz D.C."/>
            <person name="Shaw-Smith C."/>
            <person name="Stankiewicz P."/>
            <person name="Steward C."/>
            <person name="Swarbreck D."/>
            <person name="Venkataraman V."/>
            <person name="Whittaker C.A."/>
            <person name="Yang X."/>
            <person name="Zimmer A.R."/>
            <person name="Bradley A."/>
            <person name="Hubbard T."/>
            <person name="Birren B.W."/>
            <person name="Rogers J."/>
            <person name="Lander E.S."/>
            <person name="Nusbaum C."/>
        </authorList>
    </citation>
    <scope>NUCLEOTIDE SEQUENCE [LARGE SCALE GENOMIC DNA]</scope>
</reference>
<reference key="6">
    <citation type="journal article" date="2004" name="Genome Res.">
        <title>The status, quality, and expansion of the NIH full-length cDNA project: the Mammalian Gene Collection (MGC).</title>
        <authorList>
            <consortium name="The MGC Project Team"/>
        </authorList>
    </citation>
    <scope>NUCLEOTIDE SEQUENCE [LARGE SCALE MRNA] (ISOFORMS 1 AND 2)</scope>
    <scope>VARIANT ALA-26</scope>
    <source>
        <tissue>Pancreas</tissue>
    </source>
</reference>
<reference key="7">
    <citation type="journal article" date="2004" name="Protein Sci.">
        <title>Signal peptide prediction based on analysis of experimentally verified cleavage sites.</title>
        <authorList>
            <person name="Zhang Z."/>
            <person name="Henzel W.J."/>
        </authorList>
    </citation>
    <scope>PROTEIN SEQUENCE OF 25-39</scope>
</reference>
<feature type="signal peptide" evidence="2">
    <location>
        <begin position="1"/>
        <end position="24"/>
    </location>
</feature>
<feature type="chain" id="PRO_0000036407" description="Vitelline membrane outer layer protein 1 homolog">
    <location>
        <begin position="25"/>
        <end position="202"/>
    </location>
</feature>
<feature type="disulfide bond" evidence="1">
    <location>
        <begin position="53"/>
        <end position="86"/>
    </location>
</feature>
<feature type="disulfide bond" evidence="1">
    <location>
        <begin position="114"/>
        <end position="146"/>
    </location>
</feature>
<feature type="disulfide bond" evidence="1">
    <location>
        <begin position="169"/>
        <end position="199"/>
    </location>
</feature>
<feature type="disulfide bond" evidence="1">
    <location>
        <begin position="174"/>
        <end position="200"/>
    </location>
</feature>
<feature type="splice variant" id="VSP_045706" description="In isoform 2." evidence="5">
    <original>VEPPQ</original>
    <variation>LGRME</variation>
    <location>
        <begin position="66"/>
        <end position="70"/>
    </location>
</feature>
<feature type="splice variant" id="VSP_045707" description="In isoform 2." evidence="5">
    <location>
        <begin position="71"/>
        <end position="202"/>
    </location>
</feature>
<feature type="splice variant" id="VSP_045708" description="In isoform 3." evidence="6">
    <original>VESQSGSWGEWSEPLWCRGGAYLVAFSLRVEAPTTLGDNTAANNVRFRCSDGEELQGPGLSWGDFGDWSDHCPKGACGLQTKIQGPRGLGDDTALNDARLFCCRS</original>
    <variation>LGRME</variation>
    <location>
        <begin position="98"/>
        <end position="202"/>
    </location>
</feature>
<feature type="splice variant" id="VSP_047219" description="In isoform 4." evidence="7">
    <original>SWGEWSEPLWCRGGAYLVAFSLRVEAPTTLGDNTAANNVRFRCSDGEELQGPGLSWGDFGDWSDHCPKGACGLQTKIQGPRGLGDDTALNDARLFCCRS</original>
    <variation>RWGAGVEDPLG</variation>
    <location>
        <begin position="104"/>
        <end position="202"/>
    </location>
</feature>
<feature type="sequence variant" id="VAR_053736" description="In dbSNP:rs4790706." evidence="3 4">
    <original>T</original>
    <variation>A</variation>
    <location>
        <position position="26"/>
    </location>
</feature>
<feature type="sequence variant" id="VAR_034584" description="In dbSNP:rs2279961.">
    <original>T</original>
    <variation>S</variation>
    <location>
        <position position="77"/>
    </location>
</feature>
<keyword id="KW-0025">Alternative splicing</keyword>
<keyword id="KW-0903">Direct protein sequencing</keyword>
<keyword id="KW-1015">Disulfide bond</keyword>
<keyword id="KW-1267">Proteomics identification</keyword>
<keyword id="KW-1185">Reference proteome</keyword>
<keyword id="KW-0964">Secreted</keyword>
<keyword id="KW-0732">Signal</keyword>
<proteinExistence type="evidence at protein level"/>